<sequence length="72" mass="8334">MAEIKKGSLVRVVREKLENSLEAKASDNRFPAYIFESQGEIVDTRGDYAFIKFGKVPTPNIWLRLDQLEKFE</sequence>
<name>NDHO_TRIEI</name>
<accession>Q117D1</accession>
<organism>
    <name type="scientific">Trichodesmium erythraeum (strain IMS101)</name>
    <dbReference type="NCBI Taxonomy" id="203124"/>
    <lineage>
        <taxon>Bacteria</taxon>
        <taxon>Bacillati</taxon>
        <taxon>Cyanobacteriota</taxon>
        <taxon>Cyanophyceae</taxon>
        <taxon>Oscillatoriophycideae</taxon>
        <taxon>Oscillatoriales</taxon>
        <taxon>Microcoleaceae</taxon>
        <taxon>Trichodesmium</taxon>
    </lineage>
</organism>
<feature type="chain" id="PRO_0000353663" description="NAD(P)H-quinone oxidoreductase subunit O">
    <location>
        <begin position="1"/>
        <end position="72"/>
    </location>
</feature>
<protein>
    <recommendedName>
        <fullName evidence="1">NAD(P)H-quinone oxidoreductase subunit O</fullName>
        <ecNumber evidence="1">7.1.1.-</ecNumber>
    </recommendedName>
    <alternativeName>
        <fullName evidence="1">NAD(P)H dehydrogenase I subunit O</fullName>
    </alternativeName>
    <alternativeName>
        <fullName>NDH-1 subunit O</fullName>
    </alternativeName>
    <alternativeName>
        <fullName>NDH-O</fullName>
    </alternativeName>
</protein>
<proteinExistence type="inferred from homology"/>
<evidence type="ECO:0000255" key="1">
    <source>
        <dbReference type="HAMAP-Rule" id="MF_01354"/>
    </source>
</evidence>
<comment type="function">
    <text evidence="1">NDH-1 shuttles electrons from an unknown electron donor, via FMN and iron-sulfur (Fe-S) centers, to quinones in the respiratory and/or the photosynthetic chain. The immediate electron acceptor for the enzyme in this species is believed to be plastoquinone. Couples the redox reaction to proton translocation, and thus conserves the redox energy in a proton gradient. Cyanobacterial NDH-1 also plays a role in inorganic carbon-concentration.</text>
</comment>
<comment type="catalytic activity">
    <reaction evidence="1">
        <text>a plastoquinone + NADH + (n+1) H(+)(in) = a plastoquinol + NAD(+) + n H(+)(out)</text>
        <dbReference type="Rhea" id="RHEA:42608"/>
        <dbReference type="Rhea" id="RHEA-COMP:9561"/>
        <dbReference type="Rhea" id="RHEA-COMP:9562"/>
        <dbReference type="ChEBI" id="CHEBI:15378"/>
        <dbReference type="ChEBI" id="CHEBI:17757"/>
        <dbReference type="ChEBI" id="CHEBI:57540"/>
        <dbReference type="ChEBI" id="CHEBI:57945"/>
        <dbReference type="ChEBI" id="CHEBI:62192"/>
    </reaction>
</comment>
<comment type="catalytic activity">
    <reaction evidence="1">
        <text>a plastoquinone + NADPH + (n+1) H(+)(in) = a plastoquinol + NADP(+) + n H(+)(out)</text>
        <dbReference type="Rhea" id="RHEA:42612"/>
        <dbReference type="Rhea" id="RHEA-COMP:9561"/>
        <dbReference type="Rhea" id="RHEA-COMP:9562"/>
        <dbReference type="ChEBI" id="CHEBI:15378"/>
        <dbReference type="ChEBI" id="CHEBI:17757"/>
        <dbReference type="ChEBI" id="CHEBI:57783"/>
        <dbReference type="ChEBI" id="CHEBI:58349"/>
        <dbReference type="ChEBI" id="CHEBI:62192"/>
    </reaction>
</comment>
<comment type="subunit">
    <text evidence="1">NDH-1 can be composed of about 15 different subunits; different subcomplexes with different compositions have been identified which probably have different functions.</text>
</comment>
<comment type="subcellular location">
    <subcellularLocation>
        <location evidence="1">Cellular thylakoid membrane</location>
        <topology evidence="1">Peripheral membrane protein</topology>
        <orientation evidence="1">Cytoplasmic side</orientation>
    </subcellularLocation>
</comment>
<comment type="similarity">
    <text evidence="1">Belongs to the complex I NdhO subunit family.</text>
</comment>
<reference key="1">
    <citation type="journal article" date="2015" name="Proc. Natl. Acad. Sci. U.S.A.">
        <title>Trichodesmium genome maintains abundant, widespread noncoding DNA in situ, despite oligotrophic lifestyle.</title>
        <authorList>
            <person name="Walworth N."/>
            <person name="Pfreundt U."/>
            <person name="Nelson W.C."/>
            <person name="Mincer T."/>
            <person name="Heidelberg J.F."/>
            <person name="Fu F."/>
            <person name="Waterbury J.B."/>
            <person name="Glavina del Rio T."/>
            <person name="Goodwin L."/>
            <person name="Kyrpides N.C."/>
            <person name="Land M.L."/>
            <person name="Woyke T."/>
            <person name="Hutchins D.A."/>
            <person name="Hess W.R."/>
            <person name="Webb E.A."/>
        </authorList>
    </citation>
    <scope>NUCLEOTIDE SEQUENCE [LARGE SCALE GENOMIC DNA]</scope>
    <source>
        <strain>IMS101</strain>
    </source>
</reference>
<dbReference type="EC" id="7.1.1.-" evidence="1"/>
<dbReference type="EMBL" id="CP000393">
    <property type="protein sequence ID" value="ABG50393.1"/>
    <property type="molecule type" value="Genomic_DNA"/>
</dbReference>
<dbReference type="RefSeq" id="WP_011610780.1">
    <property type="nucleotide sequence ID" value="NC_008312.1"/>
</dbReference>
<dbReference type="SMR" id="Q117D1"/>
<dbReference type="STRING" id="203124.Tery_1016"/>
<dbReference type="KEGG" id="ter:Tery_1016"/>
<dbReference type="eggNOG" id="ENOG5032XZT">
    <property type="taxonomic scope" value="Bacteria"/>
</dbReference>
<dbReference type="HOGENOM" id="CLU_195299_0_0_3"/>
<dbReference type="OrthoDB" id="426633at2"/>
<dbReference type="GO" id="GO:0031676">
    <property type="term" value="C:plasma membrane-derived thylakoid membrane"/>
    <property type="evidence" value="ECO:0007669"/>
    <property type="project" value="UniProtKB-SubCell"/>
</dbReference>
<dbReference type="GO" id="GO:0016655">
    <property type="term" value="F:oxidoreductase activity, acting on NAD(P)H, quinone or similar compound as acceptor"/>
    <property type="evidence" value="ECO:0007669"/>
    <property type="project" value="UniProtKB-UniRule"/>
</dbReference>
<dbReference type="GO" id="GO:0048038">
    <property type="term" value="F:quinone binding"/>
    <property type="evidence" value="ECO:0007669"/>
    <property type="project" value="UniProtKB-KW"/>
</dbReference>
<dbReference type="HAMAP" id="MF_01354">
    <property type="entry name" value="NDH1_NDH1O"/>
    <property type="match status" value="1"/>
</dbReference>
<dbReference type="InterPro" id="IPR020905">
    <property type="entry name" value="NdhO"/>
</dbReference>
<dbReference type="Pfam" id="PF11910">
    <property type="entry name" value="NdhO"/>
    <property type="match status" value="1"/>
</dbReference>
<keyword id="KW-0472">Membrane</keyword>
<keyword id="KW-0520">NAD</keyword>
<keyword id="KW-0521">NADP</keyword>
<keyword id="KW-0618">Plastoquinone</keyword>
<keyword id="KW-0874">Quinone</keyword>
<keyword id="KW-0793">Thylakoid</keyword>
<keyword id="KW-1278">Translocase</keyword>
<keyword id="KW-0813">Transport</keyword>
<gene>
    <name evidence="1" type="primary">ndhO</name>
    <name type="ordered locus">Tery_1016</name>
</gene>